<sequence length="61" mass="6791">MKYTKFEKARIIGARALQIAMGAPVIIDIPKNVIDPVDIATIEFENNVIPITIKRVSKVLN</sequence>
<accession>P58232</accession>
<evidence type="ECO:0000255" key="1">
    <source>
        <dbReference type="HAMAP-Rule" id="MF_00192"/>
    </source>
</evidence>
<dbReference type="EC" id="2.7.7.6" evidence="1"/>
<dbReference type="EMBL" id="BA000011">
    <property type="protein sequence ID" value="BAB60391.1"/>
    <property type="molecule type" value="Genomic_DNA"/>
</dbReference>
<dbReference type="RefSeq" id="WP_010917483.1">
    <property type="nucleotide sequence ID" value="NC_002689.2"/>
</dbReference>
<dbReference type="SMR" id="P58232"/>
<dbReference type="STRING" id="273116.gene:9382054"/>
<dbReference type="PaxDb" id="273116-14325487"/>
<dbReference type="GeneID" id="1441365"/>
<dbReference type="KEGG" id="tvo:TVG1288113"/>
<dbReference type="eggNOG" id="arCOG01268">
    <property type="taxonomic scope" value="Archaea"/>
</dbReference>
<dbReference type="HOGENOM" id="CLU_112527_5_0_2"/>
<dbReference type="OrthoDB" id="10567at2157"/>
<dbReference type="PhylomeDB" id="P58232"/>
<dbReference type="Proteomes" id="UP000001017">
    <property type="component" value="Chromosome"/>
</dbReference>
<dbReference type="GO" id="GO:0005737">
    <property type="term" value="C:cytoplasm"/>
    <property type="evidence" value="ECO:0007669"/>
    <property type="project" value="UniProtKB-SubCell"/>
</dbReference>
<dbReference type="GO" id="GO:0000428">
    <property type="term" value="C:DNA-directed RNA polymerase complex"/>
    <property type="evidence" value="ECO:0007669"/>
    <property type="project" value="UniProtKB-KW"/>
</dbReference>
<dbReference type="GO" id="GO:0003677">
    <property type="term" value="F:DNA binding"/>
    <property type="evidence" value="ECO:0007669"/>
    <property type="project" value="UniProtKB-UniRule"/>
</dbReference>
<dbReference type="GO" id="GO:0003899">
    <property type="term" value="F:DNA-directed RNA polymerase activity"/>
    <property type="evidence" value="ECO:0007669"/>
    <property type="project" value="UniProtKB-UniRule"/>
</dbReference>
<dbReference type="GO" id="GO:0006360">
    <property type="term" value="P:transcription by RNA polymerase I"/>
    <property type="evidence" value="ECO:0007669"/>
    <property type="project" value="TreeGrafter"/>
</dbReference>
<dbReference type="GO" id="GO:0006366">
    <property type="term" value="P:transcription by RNA polymerase II"/>
    <property type="evidence" value="ECO:0007669"/>
    <property type="project" value="TreeGrafter"/>
</dbReference>
<dbReference type="GO" id="GO:0042797">
    <property type="term" value="P:tRNA transcription by RNA polymerase III"/>
    <property type="evidence" value="ECO:0007669"/>
    <property type="project" value="TreeGrafter"/>
</dbReference>
<dbReference type="Gene3D" id="3.90.940.10">
    <property type="match status" value="1"/>
</dbReference>
<dbReference type="HAMAP" id="MF_00192">
    <property type="entry name" value="RNApol_arch_Rpo6"/>
    <property type="match status" value="1"/>
</dbReference>
<dbReference type="InterPro" id="IPR020708">
    <property type="entry name" value="DNA-dir_RNA_polK_14-18kDa_CS"/>
</dbReference>
<dbReference type="InterPro" id="IPR006110">
    <property type="entry name" value="Pol_omega/Rpo6/RPB6"/>
</dbReference>
<dbReference type="InterPro" id="IPR036161">
    <property type="entry name" value="RPB6/omega-like_sf"/>
</dbReference>
<dbReference type="InterPro" id="IPR006111">
    <property type="entry name" value="Rpo6/Rpb6"/>
</dbReference>
<dbReference type="NCBIfam" id="NF002208">
    <property type="entry name" value="PRK01099.1-3"/>
    <property type="match status" value="1"/>
</dbReference>
<dbReference type="PANTHER" id="PTHR47227">
    <property type="entry name" value="DNA-DIRECTED RNA POLYMERASE SUBUNIT K"/>
    <property type="match status" value="1"/>
</dbReference>
<dbReference type="PANTHER" id="PTHR47227:SF5">
    <property type="entry name" value="DNA-DIRECTED RNA POLYMERASES I, II, AND III SUBUNIT RPABC2"/>
    <property type="match status" value="1"/>
</dbReference>
<dbReference type="Pfam" id="PF01192">
    <property type="entry name" value="RNA_pol_Rpb6"/>
    <property type="match status" value="1"/>
</dbReference>
<dbReference type="PIRSF" id="PIRSF000778">
    <property type="entry name" value="RpoK/RPB6"/>
    <property type="match status" value="1"/>
</dbReference>
<dbReference type="SUPFAM" id="SSF63562">
    <property type="entry name" value="RPB6/omega subunit-like"/>
    <property type="match status" value="1"/>
</dbReference>
<dbReference type="PROSITE" id="PS01111">
    <property type="entry name" value="RNA_POL_K_14KD"/>
    <property type="match status" value="1"/>
</dbReference>
<proteinExistence type="inferred from homology"/>
<reference key="1">
    <citation type="journal article" date="2000" name="Proc. Natl. Acad. Sci. U.S.A.">
        <title>Archaeal adaptation to higher temperatures revealed by genomic sequence of Thermoplasma volcanium.</title>
        <authorList>
            <person name="Kawashima T."/>
            <person name="Amano N."/>
            <person name="Koike H."/>
            <person name="Makino S."/>
            <person name="Higuchi S."/>
            <person name="Kawashima-Ohya Y."/>
            <person name="Watanabe K."/>
            <person name="Yamazaki M."/>
            <person name="Kanehori K."/>
            <person name="Kawamoto T."/>
            <person name="Nunoshiba T."/>
            <person name="Yamamoto Y."/>
            <person name="Aramaki H."/>
            <person name="Makino K."/>
            <person name="Suzuki M."/>
        </authorList>
    </citation>
    <scope>NUCLEOTIDE SEQUENCE [LARGE SCALE GENOMIC DNA]</scope>
    <source>
        <strain>ATCC 51530 / DSM 4299 / JCM 9571 / NBRC 15438 / GSS1</strain>
    </source>
</reference>
<comment type="function">
    <text evidence="1">DNA-dependent RNA polymerase (RNAP) catalyzes the transcription of DNA into RNA using the four ribonucleoside triphosphates as substrates.</text>
</comment>
<comment type="catalytic activity">
    <reaction evidence="1">
        <text>RNA(n) + a ribonucleoside 5'-triphosphate = RNA(n+1) + diphosphate</text>
        <dbReference type="Rhea" id="RHEA:21248"/>
        <dbReference type="Rhea" id="RHEA-COMP:14527"/>
        <dbReference type="Rhea" id="RHEA-COMP:17342"/>
        <dbReference type="ChEBI" id="CHEBI:33019"/>
        <dbReference type="ChEBI" id="CHEBI:61557"/>
        <dbReference type="ChEBI" id="CHEBI:140395"/>
        <dbReference type="EC" id="2.7.7.6"/>
    </reaction>
</comment>
<comment type="subunit">
    <text evidence="1">Part of the RNA polymerase complex.</text>
</comment>
<comment type="subcellular location">
    <subcellularLocation>
        <location evidence="1">Cytoplasm</location>
    </subcellularLocation>
</comment>
<comment type="similarity">
    <text evidence="1">Belongs to the archaeal Rpo6/eukaryotic RPB6 RNA polymerase subunit family.</text>
</comment>
<name>RPO6_THEVO</name>
<gene>
    <name evidence="1" type="primary">rpo6</name>
    <name evidence="1" type="synonym">rpoK</name>
    <name type="ordered locus">TV1249</name>
    <name type="ORF">TVG1288113</name>
</gene>
<feature type="chain" id="PRO_0000133826" description="DNA-directed RNA polymerase subunit Rpo6">
    <location>
        <begin position="1"/>
        <end position="61"/>
    </location>
</feature>
<keyword id="KW-0963">Cytoplasm</keyword>
<keyword id="KW-0240">DNA-directed RNA polymerase</keyword>
<keyword id="KW-0548">Nucleotidyltransferase</keyword>
<keyword id="KW-0804">Transcription</keyword>
<keyword id="KW-0808">Transferase</keyword>
<protein>
    <recommendedName>
        <fullName evidence="1">DNA-directed RNA polymerase subunit Rpo6</fullName>
        <ecNumber evidence="1">2.7.7.6</ecNumber>
    </recommendedName>
    <alternativeName>
        <fullName evidence="1">DNA-directed RNA polymerase subunit K</fullName>
    </alternativeName>
</protein>
<organism>
    <name type="scientific">Thermoplasma volcanium (strain ATCC 51530 / DSM 4299 / JCM 9571 / NBRC 15438 / GSS1)</name>
    <dbReference type="NCBI Taxonomy" id="273116"/>
    <lineage>
        <taxon>Archaea</taxon>
        <taxon>Methanobacteriati</taxon>
        <taxon>Thermoplasmatota</taxon>
        <taxon>Thermoplasmata</taxon>
        <taxon>Thermoplasmatales</taxon>
        <taxon>Thermoplasmataceae</taxon>
        <taxon>Thermoplasma</taxon>
    </lineage>
</organism>